<proteinExistence type="evidence at protein level"/>
<accession>Q9RY80</accession>
<accession>C6SUN7</accession>
<keyword id="KW-0002">3D-structure</keyword>
<keyword id="KW-0227">DNA damage</keyword>
<keyword id="KW-0234">DNA repair</keyword>
<keyword id="KW-0238">DNA-binding</keyword>
<keyword id="KW-1185">Reference proteome</keyword>
<keyword id="KW-0346">Stress response</keyword>
<dbReference type="EMBL" id="AE000513">
    <property type="protein sequence ID" value="AAF09667.1"/>
    <property type="status" value="ALT_INIT"/>
    <property type="molecule type" value="Genomic_DNA"/>
</dbReference>
<dbReference type="EMBL" id="BK006794">
    <property type="protein sequence ID" value="DAA06535.1"/>
    <property type="molecule type" value="Genomic_DNA"/>
</dbReference>
<dbReference type="PIR" id="D75563">
    <property type="entry name" value="D75563"/>
</dbReference>
<dbReference type="RefSeq" id="NP_293796.1">
    <property type="nucleotide sequence ID" value="NC_001263.1"/>
</dbReference>
<dbReference type="RefSeq" id="WP_027480237.1">
    <property type="nucleotide sequence ID" value="NC_001263.1"/>
</dbReference>
<dbReference type="PDB" id="4HQB">
    <property type="method" value="X-ray"/>
    <property type="resolution" value="2.30 A"/>
    <property type="chains" value="A/B/C/D/E=1-144"/>
</dbReference>
<dbReference type="PDB" id="4NOE">
    <property type="method" value="X-ray"/>
    <property type="resolution" value="2.20 A"/>
    <property type="chains" value="A/B/C/D/E=1-144"/>
</dbReference>
<dbReference type="PDBsum" id="4HQB"/>
<dbReference type="PDBsum" id="4NOE"/>
<dbReference type="SMR" id="Q9RY80"/>
<dbReference type="STRING" id="243230.DR_0070"/>
<dbReference type="PaxDb" id="243230-DR_0070"/>
<dbReference type="EnsemblBacteria" id="AAF09667">
    <property type="protein sequence ID" value="AAF09667"/>
    <property type="gene ID" value="DR_0070"/>
</dbReference>
<dbReference type="GeneID" id="69516299"/>
<dbReference type="KEGG" id="dra:DR_0070"/>
<dbReference type="PATRIC" id="fig|243230.17.peg.233"/>
<dbReference type="eggNOG" id="ENOG50337A5">
    <property type="taxonomic scope" value="Bacteria"/>
</dbReference>
<dbReference type="HOGENOM" id="CLU_129192_0_0_0"/>
<dbReference type="InParanoid" id="Q9RY80"/>
<dbReference type="OrthoDB" id="65756at2"/>
<dbReference type="EvolutionaryTrace" id="Q9RY80"/>
<dbReference type="Proteomes" id="UP000002524">
    <property type="component" value="Chromosome 1"/>
</dbReference>
<dbReference type="GO" id="GO:0003697">
    <property type="term" value="F:single-stranded DNA binding"/>
    <property type="evidence" value="ECO:0000314"/>
    <property type="project" value="UniProtKB"/>
</dbReference>
<dbReference type="GO" id="GO:0071465">
    <property type="term" value="P:cellular response to desiccation"/>
    <property type="evidence" value="ECO:0000270"/>
    <property type="project" value="UniProtKB"/>
</dbReference>
<dbReference type="GO" id="GO:0071480">
    <property type="term" value="P:cellular response to gamma radiation"/>
    <property type="evidence" value="ECO:0000270"/>
    <property type="project" value="UniProtKB"/>
</dbReference>
<dbReference type="GO" id="GO:0006281">
    <property type="term" value="P:DNA repair"/>
    <property type="evidence" value="ECO:0000315"/>
    <property type="project" value="UniProtKB"/>
</dbReference>
<dbReference type="GO" id="GO:0045002">
    <property type="term" value="P:double-strand break repair via single-strand annealing"/>
    <property type="evidence" value="ECO:0000314"/>
    <property type="project" value="CACAO"/>
</dbReference>
<dbReference type="InterPro" id="IPR024305">
    <property type="entry name" value="ssDNA-bd_DdrB-like"/>
</dbReference>
<dbReference type="Pfam" id="PF12747">
    <property type="entry name" value="DdrB"/>
    <property type="match status" value="1"/>
</dbReference>
<name>DDRB_DEIRA</name>
<evidence type="ECO:0000250" key="1"/>
<evidence type="ECO:0000256" key="2">
    <source>
        <dbReference type="SAM" id="MobiDB-lite"/>
    </source>
</evidence>
<evidence type="ECO:0000269" key="3">
    <source>
    </source>
</evidence>
<evidence type="ECO:0000269" key="4">
    <source>
    </source>
</evidence>
<evidence type="ECO:0000269" key="5">
    <source>
    </source>
</evidence>
<evidence type="ECO:0000269" key="6">
    <source>
    </source>
</evidence>
<evidence type="ECO:0000269" key="7">
    <source>
    </source>
</evidence>
<evidence type="ECO:0000305" key="8"/>
<evidence type="ECO:0007829" key="9">
    <source>
        <dbReference type="PDB" id="4HQB"/>
    </source>
</evidence>
<evidence type="ECO:0007829" key="10">
    <source>
        <dbReference type="PDB" id="4NOE"/>
    </source>
</evidence>
<comment type="function">
    <text evidence="3 4 5 6">ssDNA-binding protein that contributes to the ionizing radiation resistance of D.radiodurans. Plays a role in DNA repair and genome reconstitution in a RecA-independent process. Required for recovery from severe genomic fragmentation as a result of exposure to severe levels of ionizing radiation. Binds ssDNA but not dsDNA. Stimulates annealing of complementary ssDNA. Does not complement an ssb disruption.</text>
</comment>
<comment type="subunit">
    <text evidence="4 5 7">Homopentamer arranged in a ring-structure; DNA binds between subunits and along the top of the ring. The pentamers self-associate to coat ssDNA in higher-ordered structures; oligomerization facilitates the assembly of extended nucleoprotein complexes. Self-assembly does not however require ssDNA-binding. Interacts with SSB.</text>
</comment>
<comment type="induction">
    <text evidence="3">Induced to high levels following extreme ionizing radiation exposure. Also highly induced in response to desiccation stress.</text>
</comment>
<comment type="domain">
    <text evidence="1">Contains a novel ssDNA-binding fold, which is structurally and topologically distinct from the OB-fold universally found in standard SSB proteins. The disordered C-terminus of DdrB may mediate interactions with other proteins important for DNA damage recovery (By similarity).</text>
</comment>
<comment type="mass spectrometry">
    <text>Tagged N-terminally with 6 His residues.</text>
</comment>
<comment type="disruption phenotype">
    <text evidence="3 5 6">Cells lacking this gene show a normal growth rate, do not exhibit a decrease in the efficiency of natural transformation, but display a reduced capacity to survive ionizing radiation when exposed at doses superior to 2.5 kGy. DNA repair following irradiations is slower. Cannot be complemented by ssb. A double recA-ddrB disruption shows no signs of DNA repair 24 hours after irradiation.</text>
</comment>
<comment type="sequence caution" evidence="8">
    <conflict type="erroneous initiation">
        <sequence resource="EMBL-CDS" id="AAF09667"/>
    </conflict>
    <text>Extended N-terminus.</text>
</comment>
<organism>
    <name type="scientific">Deinococcus radiodurans (strain ATCC 13939 / DSM 20539 / JCM 16871 / CCUG 27074 / LMG 4051 / NBRC 15346 / NCIMB 9279 / VKM B-1422 / R1)</name>
    <dbReference type="NCBI Taxonomy" id="243230"/>
    <lineage>
        <taxon>Bacteria</taxon>
        <taxon>Thermotogati</taxon>
        <taxon>Deinococcota</taxon>
        <taxon>Deinococci</taxon>
        <taxon>Deinococcales</taxon>
        <taxon>Deinococcaceae</taxon>
        <taxon>Deinococcus</taxon>
    </lineage>
</organism>
<sequence>MLQIEFITDLGARVTVNVEHESRLLDVQRHYGRLGWTSGEIPSGGYQFPIENEADFDWSLIGARKWKSPEGEELVIHRGHAYRRRELEAVDSRKLKLPAAIKYSRGAKVSDPQHVREKADGDIEYVSLAIFRGGKRQERYAVPGGAAGNGQGRPAPQGQPAQARPQATAARPAARPPVQPGQEEETPF</sequence>
<gene>
    <name type="primary">ddrB</name>
    <name type="ordered locus">DR_0070</name>
</gene>
<feature type="chain" id="PRO_0000394491" description="Single-stranded DNA-binding protein DdrB">
    <location>
        <begin position="1"/>
        <end position="188"/>
    </location>
</feature>
<feature type="region of interest" description="Disordered" evidence="2">
    <location>
        <begin position="140"/>
        <end position="188"/>
    </location>
</feature>
<feature type="compositionally biased region" description="Low complexity" evidence="2">
    <location>
        <begin position="152"/>
        <end position="173"/>
    </location>
</feature>
<feature type="mutagenesis site" description="Forms pentamers but not higher-ordered structures; binds ssDNA normally." evidence="7">
    <original>E</original>
    <variation>A</variation>
    <location>
        <position position="51"/>
    </location>
</feature>
<feature type="mutagenesis site" description="Reduced ssDNA-binding." evidence="7">
    <original>R</original>
    <variation>A</variation>
    <location>
        <position position="64"/>
    </location>
</feature>
<feature type="mutagenesis site" description="Reduced ssDNA-binding." evidence="7">
    <original>W</original>
    <variation>A</variation>
    <location>
        <position position="66"/>
    </location>
</feature>
<feature type="mutagenesis site" description="Forms pentamers but not higher-ordered structures, reduced ssDNA-binding." evidence="7">
    <original>R</original>
    <variation>A</variation>
    <location>
        <position position="83"/>
    </location>
</feature>
<feature type="mutagenesis site" description="Reduced ssDNA-binding." evidence="7">
    <original>R</original>
    <variation>A</variation>
    <location>
        <position position="85"/>
    </location>
</feature>
<feature type="mutagenesis site" description="Reduced ssDNA-binding." evidence="7">
    <original>K</original>
    <variation>A</variation>
    <location>
        <position position="94"/>
    </location>
</feature>
<feature type="mutagenesis site" description="Reduced ssDNA-binding." evidence="7">
    <original>K</original>
    <variation>A</variation>
    <location>
        <position position="102"/>
    </location>
</feature>
<feature type="mutagenesis site" description="Reduced ssDNA-binding." evidence="7">
    <original>K</original>
    <variation>A</variation>
    <location>
        <position position="108"/>
    </location>
</feature>
<feature type="mutagenesis site" description="Reduced ssDNA-binding." evidence="7">
    <original>R</original>
    <variation>A</variation>
    <location>
        <position position="132"/>
    </location>
</feature>
<feature type="mutagenesis site" description="Reduced ssDNA-binding." evidence="7">
    <original>K</original>
    <variation>A</variation>
    <location>
        <position position="135"/>
    </location>
</feature>
<feature type="strand" evidence="10">
    <location>
        <begin position="2"/>
        <end position="7"/>
    </location>
</feature>
<feature type="strand" evidence="10">
    <location>
        <begin position="13"/>
        <end position="20"/>
    </location>
</feature>
<feature type="helix" evidence="10">
    <location>
        <begin position="21"/>
        <end position="23"/>
    </location>
</feature>
<feature type="helix" evidence="10">
    <location>
        <begin position="24"/>
        <end position="33"/>
    </location>
</feature>
<feature type="strand" evidence="10">
    <location>
        <begin position="46"/>
        <end position="48"/>
    </location>
</feature>
<feature type="helix" evidence="10">
    <location>
        <begin position="50"/>
        <end position="52"/>
    </location>
</feature>
<feature type="helix" evidence="10">
    <location>
        <begin position="58"/>
        <end position="61"/>
    </location>
</feature>
<feature type="strand" evidence="10">
    <location>
        <begin position="64"/>
        <end position="66"/>
    </location>
</feature>
<feature type="turn" evidence="9">
    <location>
        <begin position="69"/>
        <end position="71"/>
    </location>
</feature>
<feature type="strand" evidence="10">
    <location>
        <begin position="74"/>
        <end position="77"/>
    </location>
</feature>
<feature type="strand" evidence="10">
    <location>
        <begin position="80"/>
        <end position="87"/>
    </location>
</feature>
<feature type="strand" evidence="9">
    <location>
        <begin position="90"/>
        <end position="92"/>
    </location>
</feature>
<feature type="strand" evidence="10">
    <location>
        <begin position="93"/>
        <end position="97"/>
    </location>
</feature>
<feature type="strand" evidence="10">
    <location>
        <begin position="100"/>
        <end position="106"/>
    </location>
</feature>
<feature type="helix" evidence="10">
    <location>
        <begin position="113"/>
        <end position="115"/>
    </location>
</feature>
<feature type="helix" evidence="10">
    <location>
        <begin position="120"/>
        <end position="122"/>
    </location>
</feature>
<feature type="strand" evidence="10">
    <location>
        <begin position="124"/>
        <end position="131"/>
    </location>
</feature>
<feature type="helix" evidence="10">
    <location>
        <begin position="138"/>
        <end position="140"/>
    </location>
</feature>
<protein>
    <recommendedName>
        <fullName>Single-stranded DNA-binding protein DdrB</fullName>
    </recommendedName>
    <alternativeName>
        <fullName>DNA damage response protein B</fullName>
    </alternativeName>
</protein>
<reference key="1">
    <citation type="journal article" date="1999" name="Science">
        <title>Genome sequence of the radioresistant bacterium Deinococcus radiodurans R1.</title>
        <authorList>
            <person name="White O."/>
            <person name="Eisen J.A."/>
            <person name="Heidelberg J.F."/>
            <person name="Hickey E.K."/>
            <person name="Peterson J.D."/>
            <person name="Dodson R.J."/>
            <person name="Haft D.H."/>
            <person name="Gwinn M.L."/>
            <person name="Nelson W.C."/>
            <person name="Richardson D.L."/>
            <person name="Moffat K.S."/>
            <person name="Qin H."/>
            <person name="Jiang L."/>
            <person name="Pamphile W."/>
            <person name="Crosby M."/>
            <person name="Shen M."/>
            <person name="Vamathevan J.J."/>
            <person name="Lam P."/>
            <person name="McDonald L.A."/>
            <person name="Utterback T.R."/>
            <person name="Zalewski C."/>
            <person name="Makarova K.S."/>
            <person name="Aravind L."/>
            <person name="Daly M.J."/>
            <person name="Minton K.W."/>
            <person name="Fleischmann R.D."/>
            <person name="Ketchum K.A."/>
            <person name="Nelson K.E."/>
            <person name="Salzberg S.L."/>
            <person name="Smith H.O."/>
            <person name="Venter J.C."/>
            <person name="Fraser C.M."/>
        </authorList>
    </citation>
    <scope>NUCLEOTIDE SEQUENCE [LARGE SCALE GENOMIC DNA]</scope>
    <source>
        <strain>ATCC 13939 / DSM 20539 / JCM 16871 / CCUG 27074 / LMG 4051 / NBRC 15346 / NCIMB 9279 / VKM B-1422 / R1</strain>
    </source>
</reference>
<reference key="2">
    <citation type="journal article" date="2004" name="Genetics">
        <title>Analysis of Deinococcus radiodurans's transcriptional response to ionizing radiation and desiccation reveals novel proteins that contribute to extreme radioresistance.</title>
        <authorList>
            <person name="Tanaka M."/>
            <person name="Earl A.M."/>
            <person name="Howell H.A."/>
            <person name="Park M.J."/>
            <person name="Eisen J.A."/>
            <person name="Peterson S.N."/>
            <person name="Battista J.R."/>
        </authorList>
    </citation>
    <scope>INDUCTION</scope>
    <scope>ROLE IN RADIORESISTANCE</scope>
    <scope>DISRUPTION PHENOTYPE</scope>
    <source>
        <strain>ATCC 13939 / DSM 20539 / JCM 16871 / CCUG 27074 / LMG 4051 / NBRC 15346 / NCIMB 9279 / VKM B-1422 / R1</strain>
    </source>
</reference>
<reference key="3">
    <citation type="journal article" date="2009" name="J. Biol. Chem.">
        <title>DdrB protein, an alternative Deinococcus radiodurans SSB induced by ionizing radiation.</title>
        <authorList>
            <person name="Norais C.A."/>
            <person name="Chitteni-Pattu S."/>
            <person name="Wood E.A."/>
            <person name="Inman R.B."/>
            <person name="Cox M.M."/>
        </authorList>
    </citation>
    <scope>IDENTIFICATION OF START CODON</scope>
    <scope>FUNCTION AS A SSB PROTEIN</scope>
    <scope>SUBUNIT</scope>
    <source>
        <strain>ATCC 13939 / DSM 20539 / JCM 16871 / CCUG 27074 / LMG 4051 / NBRC 15346 / NCIMB 9279 / VKM B-1422 / R1</strain>
    </source>
</reference>
<reference key="4">
    <citation type="journal article" date="2010" name="DNA Repair">
        <title>DdrB stimulates single-stranded DNA annealing and facilitates RecA-independent DNA repair in Deinococcus radiodurans.</title>
        <authorList>
            <person name="Xu G."/>
            <person name="Lu H."/>
            <person name="Wang L."/>
            <person name="Chen H."/>
            <person name="Xu Z."/>
            <person name="Hu Y."/>
            <person name="Tian B."/>
            <person name="Hua Y."/>
        </authorList>
    </citation>
    <scope>FUNCTION</scope>
    <scope>INTERACTION WITH SSB</scope>
    <scope>MASS SPECTROMETRY</scope>
    <scope>SSDNA-BINDING</scope>
    <scope>DISRUPTION PHENOTYPE</scope>
    <source>
        <strain>ATCC 13939 / DSM 20539 / JCM 16871 / CCUG 27074 / LMG 4051 / NBRC 15346 / NCIMB 9279 / VKM B-1422 / R1</strain>
    </source>
</reference>
<reference key="5">
    <citation type="journal article" date="2013" name="PLoS ONE">
        <title>The essential role of the Deinococcus radiodurans ssb gene in cell survival and radiation tolerance.</title>
        <authorList>
            <person name="Lockhart J.S."/>
            <person name="DeVeaux L.C."/>
        </authorList>
    </citation>
    <scope>FUNCTION</scope>
    <scope>DISRUPTION PHENOTYPE</scope>
    <source>
        <strain>ATCC 13939 / DSM 20539 / JCM 16871 / CCUG 27074 / LMG 4051 / NBRC 15346 / NCIMB 9279 / VKM B-1422 / R1</strain>
    </source>
</reference>
<reference key="6">
    <citation type="journal article" date="2013" name="Nucleic Acids Res.">
        <title>Crystal structure of the DdrB/ssDNA complex from Deinococcus radiodurans reveals a DNA binding surface involving higher-order oligomeric states.</title>
        <authorList>
            <person name="Sugiman-Marangos S.N."/>
            <person name="Peel J.K."/>
            <person name="Weiss Y.M."/>
            <person name="Ghirlando R."/>
            <person name="Junop M.S."/>
        </authorList>
    </citation>
    <scope>X-RAY CRYSTALLOGRAPHY (2.3 ANGSTROMS) OF 1-144 IN COMPLEX WITH SSDNA</scope>
    <scope>SUBUNIT</scope>
    <scope>MUTAGENESIS OF GLU-51; ARG-64; TRP-66; ARG-83; ARG-85; LYS-94; LYS-102; LYS-108; ARG-132 AND LYS-135</scope>
    <source>
        <strain>ATCC 13939 / DSM 20539 / JCM 16871 / CCUG 27074 / LMG 4051 / NBRC 15346 / NCIMB 9279 / VKM B-1422 / R1</strain>
    </source>
</reference>